<sequence length="428" mass="46374">MESLTLQPIVHIEGTINLPGSKSVSNRALLLAALAKGKTRLTNLLDSDDIRHMLNALTALGVQYQLSNNNTVCDIEGLAGSFHPQQPLELFLGNAGTAMRPLAAALSLGEHDIVLTGEPRMKERPIGHLVDALRQGGAKIDYLEQTDYPPLRVCGGFSGGSVDVDGTVSSQFLTALLMMAPLAQQDTTITIKGELVSKPYIDITLALINTFGGEIENQNYQRFMIKGGQQYQSPGKYLVEGDASSASYFLAAAAIKGGIVRVTGIGKNSLQGDIHFASVLEKMGATIRWGDDYIECERGKLKGIDMDMNTIPDAAMTIATTALFAEGETTIRNIYNWRVKETDRLSAMATELRKVGAMVDEGRDYLTVIPPKQLTTAEIKTYNDHRIAMCFSLVALSNTPITILDPGCTAKTFPDYFEKLASISHAKV</sequence>
<reference key="1">
    <citation type="journal article" date="2008" name="J. Bacteriol.">
        <title>Complete genome sequence of uropathogenic Proteus mirabilis, a master of both adherence and motility.</title>
        <authorList>
            <person name="Pearson M.M."/>
            <person name="Sebaihia M."/>
            <person name="Churcher C."/>
            <person name="Quail M.A."/>
            <person name="Seshasayee A.S."/>
            <person name="Luscombe N.M."/>
            <person name="Abdellah Z."/>
            <person name="Arrosmith C."/>
            <person name="Atkin B."/>
            <person name="Chillingworth T."/>
            <person name="Hauser H."/>
            <person name="Jagels K."/>
            <person name="Moule S."/>
            <person name="Mungall K."/>
            <person name="Norbertczak H."/>
            <person name="Rabbinowitsch E."/>
            <person name="Walker D."/>
            <person name="Whithead S."/>
            <person name="Thomson N.R."/>
            <person name="Rather P.N."/>
            <person name="Parkhill J."/>
            <person name="Mobley H.L.T."/>
        </authorList>
    </citation>
    <scope>NUCLEOTIDE SEQUENCE [LARGE SCALE GENOMIC DNA]</scope>
    <source>
        <strain>HI4320</strain>
    </source>
</reference>
<dbReference type="EC" id="2.5.1.19" evidence="1"/>
<dbReference type="EMBL" id="AM942759">
    <property type="protein sequence ID" value="CAR41667.1"/>
    <property type="molecule type" value="Genomic_DNA"/>
</dbReference>
<dbReference type="RefSeq" id="WP_012367711.1">
    <property type="nucleotide sequence ID" value="NC_010554.1"/>
</dbReference>
<dbReference type="SMR" id="B4ET25"/>
<dbReference type="EnsemblBacteria" id="CAR41667">
    <property type="protein sequence ID" value="CAR41667"/>
    <property type="gene ID" value="PMI0713"/>
</dbReference>
<dbReference type="GeneID" id="6801170"/>
<dbReference type="KEGG" id="pmr:PMI0713"/>
<dbReference type="PATRIC" id="fig|529507.6.peg.695"/>
<dbReference type="eggNOG" id="COG0128">
    <property type="taxonomic scope" value="Bacteria"/>
</dbReference>
<dbReference type="HOGENOM" id="CLU_024321_0_0_6"/>
<dbReference type="UniPathway" id="UPA00053">
    <property type="reaction ID" value="UER00089"/>
</dbReference>
<dbReference type="Proteomes" id="UP000008319">
    <property type="component" value="Chromosome"/>
</dbReference>
<dbReference type="GO" id="GO:0005737">
    <property type="term" value="C:cytoplasm"/>
    <property type="evidence" value="ECO:0007669"/>
    <property type="project" value="UniProtKB-SubCell"/>
</dbReference>
<dbReference type="GO" id="GO:0003866">
    <property type="term" value="F:3-phosphoshikimate 1-carboxyvinyltransferase activity"/>
    <property type="evidence" value="ECO:0007669"/>
    <property type="project" value="UniProtKB-UniRule"/>
</dbReference>
<dbReference type="GO" id="GO:0008652">
    <property type="term" value="P:amino acid biosynthetic process"/>
    <property type="evidence" value="ECO:0007669"/>
    <property type="project" value="UniProtKB-KW"/>
</dbReference>
<dbReference type="GO" id="GO:0009073">
    <property type="term" value="P:aromatic amino acid family biosynthetic process"/>
    <property type="evidence" value="ECO:0007669"/>
    <property type="project" value="UniProtKB-KW"/>
</dbReference>
<dbReference type="GO" id="GO:0009423">
    <property type="term" value="P:chorismate biosynthetic process"/>
    <property type="evidence" value="ECO:0007669"/>
    <property type="project" value="UniProtKB-UniRule"/>
</dbReference>
<dbReference type="CDD" id="cd01556">
    <property type="entry name" value="EPSP_synthase"/>
    <property type="match status" value="1"/>
</dbReference>
<dbReference type="FunFam" id="3.65.10.10:FF:000003">
    <property type="entry name" value="3-phosphoshikimate 1-carboxyvinyltransferase"/>
    <property type="match status" value="1"/>
</dbReference>
<dbReference type="FunFam" id="3.65.10.10:FF:000004">
    <property type="entry name" value="3-phosphoshikimate 1-carboxyvinyltransferase"/>
    <property type="match status" value="1"/>
</dbReference>
<dbReference type="Gene3D" id="3.65.10.10">
    <property type="entry name" value="Enolpyruvate transferase domain"/>
    <property type="match status" value="2"/>
</dbReference>
<dbReference type="HAMAP" id="MF_00210">
    <property type="entry name" value="EPSP_synth"/>
    <property type="match status" value="1"/>
</dbReference>
<dbReference type="InterPro" id="IPR001986">
    <property type="entry name" value="Enolpyruvate_Tfrase_dom"/>
</dbReference>
<dbReference type="InterPro" id="IPR036968">
    <property type="entry name" value="Enolpyruvate_Tfrase_sf"/>
</dbReference>
<dbReference type="InterPro" id="IPR006264">
    <property type="entry name" value="EPSP_synthase"/>
</dbReference>
<dbReference type="InterPro" id="IPR023193">
    <property type="entry name" value="EPSP_synthase_CS"/>
</dbReference>
<dbReference type="InterPro" id="IPR013792">
    <property type="entry name" value="RNA3'P_cycl/enolpyr_Trfase_a/b"/>
</dbReference>
<dbReference type="NCBIfam" id="TIGR01356">
    <property type="entry name" value="aroA"/>
    <property type="match status" value="1"/>
</dbReference>
<dbReference type="PANTHER" id="PTHR21090">
    <property type="entry name" value="AROM/DEHYDROQUINATE SYNTHASE"/>
    <property type="match status" value="1"/>
</dbReference>
<dbReference type="PANTHER" id="PTHR21090:SF5">
    <property type="entry name" value="PENTAFUNCTIONAL AROM POLYPEPTIDE"/>
    <property type="match status" value="1"/>
</dbReference>
<dbReference type="Pfam" id="PF00275">
    <property type="entry name" value="EPSP_synthase"/>
    <property type="match status" value="1"/>
</dbReference>
<dbReference type="PIRSF" id="PIRSF000505">
    <property type="entry name" value="EPSPS"/>
    <property type="match status" value="1"/>
</dbReference>
<dbReference type="SUPFAM" id="SSF55205">
    <property type="entry name" value="EPT/RTPC-like"/>
    <property type="match status" value="1"/>
</dbReference>
<dbReference type="PROSITE" id="PS00104">
    <property type="entry name" value="EPSP_SYNTHASE_1"/>
    <property type="match status" value="1"/>
</dbReference>
<dbReference type="PROSITE" id="PS00885">
    <property type="entry name" value="EPSP_SYNTHASE_2"/>
    <property type="match status" value="1"/>
</dbReference>
<keyword id="KW-0028">Amino-acid biosynthesis</keyword>
<keyword id="KW-0057">Aromatic amino acid biosynthesis</keyword>
<keyword id="KW-0963">Cytoplasm</keyword>
<keyword id="KW-1185">Reference proteome</keyword>
<keyword id="KW-0808">Transferase</keyword>
<proteinExistence type="inferred from homology"/>
<protein>
    <recommendedName>
        <fullName evidence="1">3-phosphoshikimate 1-carboxyvinyltransferase</fullName>
        <ecNumber evidence="1">2.5.1.19</ecNumber>
    </recommendedName>
    <alternativeName>
        <fullName evidence="1">5-enolpyruvylshikimate-3-phosphate synthase</fullName>
        <shortName evidence="1">EPSP synthase</shortName>
        <shortName evidence="1">EPSPS</shortName>
    </alternativeName>
</protein>
<accession>B4ET25</accession>
<evidence type="ECO:0000255" key="1">
    <source>
        <dbReference type="HAMAP-Rule" id="MF_00210"/>
    </source>
</evidence>
<name>AROA_PROMH</name>
<comment type="function">
    <text evidence="1">Catalyzes the transfer of the enolpyruvyl moiety of phosphoenolpyruvate (PEP) to the 5-hydroxyl of shikimate-3-phosphate (S3P) to produce enolpyruvyl shikimate-3-phosphate and inorganic phosphate.</text>
</comment>
<comment type="catalytic activity">
    <reaction evidence="1">
        <text>3-phosphoshikimate + phosphoenolpyruvate = 5-O-(1-carboxyvinyl)-3-phosphoshikimate + phosphate</text>
        <dbReference type="Rhea" id="RHEA:21256"/>
        <dbReference type="ChEBI" id="CHEBI:43474"/>
        <dbReference type="ChEBI" id="CHEBI:57701"/>
        <dbReference type="ChEBI" id="CHEBI:58702"/>
        <dbReference type="ChEBI" id="CHEBI:145989"/>
        <dbReference type="EC" id="2.5.1.19"/>
    </reaction>
    <physiologicalReaction direction="left-to-right" evidence="1">
        <dbReference type="Rhea" id="RHEA:21257"/>
    </physiologicalReaction>
</comment>
<comment type="pathway">
    <text evidence="1">Metabolic intermediate biosynthesis; chorismate biosynthesis; chorismate from D-erythrose 4-phosphate and phosphoenolpyruvate: step 6/7.</text>
</comment>
<comment type="subunit">
    <text evidence="1">Monomer.</text>
</comment>
<comment type="subcellular location">
    <subcellularLocation>
        <location evidence="1">Cytoplasm</location>
    </subcellularLocation>
</comment>
<comment type="similarity">
    <text evidence="1">Belongs to the EPSP synthase family.</text>
</comment>
<gene>
    <name evidence="1" type="primary">aroA</name>
    <name type="ordered locus">PMI0713</name>
</gene>
<organism>
    <name type="scientific">Proteus mirabilis (strain HI4320)</name>
    <dbReference type="NCBI Taxonomy" id="529507"/>
    <lineage>
        <taxon>Bacteria</taxon>
        <taxon>Pseudomonadati</taxon>
        <taxon>Pseudomonadota</taxon>
        <taxon>Gammaproteobacteria</taxon>
        <taxon>Enterobacterales</taxon>
        <taxon>Morganellaceae</taxon>
        <taxon>Proteus</taxon>
    </lineage>
</organism>
<feature type="chain" id="PRO_1000099740" description="3-phosphoshikimate 1-carboxyvinyltransferase">
    <location>
        <begin position="1"/>
        <end position="428"/>
    </location>
</feature>
<feature type="active site" description="Proton acceptor" evidence="1">
    <location>
        <position position="313"/>
    </location>
</feature>
<feature type="binding site" evidence="1">
    <location>
        <position position="22"/>
    </location>
    <ligand>
        <name>3-phosphoshikimate</name>
        <dbReference type="ChEBI" id="CHEBI:145989"/>
    </ligand>
</feature>
<feature type="binding site" evidence="1">
    <location>
        <position position="22"/>
    </location>
    <ligand>
        <name>phosphoenolpyruvate</name>
        <dbReference type="ChEBI" id="CHEBI:58702"/>
    </ligand>
</feature>
<feature type="binding site" evidence="1">
    <location>
        <position position="23"/>
    </location>
    <ligand>
        <name>3-phosphoshikimate</name>
        <dbReference type="ChEBI" id="CHEBI:145989"/>
    </ligand>
</feature>
<feature type="binding site" evidence="1">
    <location>
        <position position="27"/>
    </location>
    <ligand>
        <name>3-phosphoshikimate</name>
        <dbReference type="ChEBI" id="CHEBI:145989"/>
    </ligand>
</feature>
<feature type="binding site" evidence="1">
    <location>
        <position position="96"/>
    </location>
    <ligand>
        <name>phosphoenolpyruvate</name>
        <dbReference type="ChEBI" id="CHEBI:58702"/>
    </ligand>
</feature>
<feature type="binding site" evidence="1">
    <location>
        <position position="124"/>
    </location>
    <ligand>
        <name>phosphoenolpyruvate</name>
        <dbReference type="ChEBI" id="CHEBI:58702"/>
    </ligand>
</feature>
<feature type="binding site" evidence="1">
    <location>
        <position position="169"/>
    </location>
    <ligand>
        <name>3-phosphoshikimate</name>
        <dbReference type="ChEBI" id="CHEBI:145989"/>
    </ligand>
</feature>
<feature type="binding site" evidence="1">
    <location>
        <position position="170"/>
    </location>
    <ligand>
        <name>3-phosphoshikimate</name>
        <dbReference type="ChEBI" id="CHEBI:145989"/>
    </ligand>
</feature>
<feature type="binding site" evidence="1">
    <location>
        <position position="171"/>
    </location>
    <ligand>
        <name>3-phosphoshikimate</name>
        <dbReference type="ChEBI" id="CHEBI:145989"/>
    </ligand>
</feature>
<feature type="binding site" evidence="1">
    <location>
        <position position="171"/>
    </location>
    <ligand>
        <name>phosphoenolpyruvate</name>
        <dbReference type="ChEBI" id="CHEBI:58702"/>
    </ligand>
</feature>
<feature type="binding site" evidence="1">
    <location>
        <position position="197"/>
    </location>
    <ligand>
        <name>3-phosphoshikimate</name>
        <dbReference type="ChEBI" id="CHEBI:145989"/>
    </ligand>
</feature>
<feature type="binding site" evidence="1">
    <location>
        <position position="313"/>
    </location>
    <ligand>
        <name>3-phosphoshikimate</name>
        <dbReference type="ChEBI" id="CHEBI:145989"/>
    </ligand>
</feature>
<feature type="binding site" evidence="1">
    <location>
        <position position="336"/>
    </location>
    <ligand>
        <name>3-phosphoshikimate</name>
        <dbReference type="ChEBI" id="CHEBI:145989"/>
    </ligand>
</feature>
<feature type="binding site" evidence="1">
    <location>
        <position position="340"/>
    </location>
    <ligand>
        <name>3-phosphoshikimate</name>
        <dbReference type="ChEBI" id="CHEBI:145989"/>
    </ligand>
</feature>
<feature type="binding site" evidence="1">
    <location>
        <position position="344"/>
    </location>
    <ligand>
        <name>phosphoenolpyruvate</name>
        <dbReference type="ChEBI" id="CHEBI:58702"/>
    </ligand>
</feature>
<feature type="binding site" evidence="1">
    <location>
        <position position="386"/>
    </location>
    <ligand>
        <name>phosphoenolpyruvate</name>
        <dbReference type="ChEBI" id="CHEBI:58702"/>
    </ligand>
</feature>
<feature type="binding site" evidence="1">
    <location>
        <position position="411"/>
    </location>
    <ligand>
        <name>phosphoenolpyruvate</name>
        <dbReference type="ChEBI" id="CHEBI:58702"/>
    </ligand>
</feature>